<organism>
    <name type="scientific">Dictyostelium discoideum</name>
    <name type="common">Social amoeba</name>
    <dbReference type="NCBI Taxonomy" id="44689"/>
    <lineage>
        <taxon>Eukaryota</taxon>
        <taxon>Amoebozoa</taxon>
        <taxon>Evosea</taxon>
        <taxon>Eumycetozoa</taxon>
        <taxon>Dictyostelia</taxon>
        <taxon>Dictyosteliales</taxon>
        <taxon>Dictyosteliaceae</taxon>
        <taxon>Dictyostelium</taxon>
    </lineage>
</organism>
<keyword id="KW-0472">Membrane</keyword>
<keyword id="KW-1185">Reference proteome</keyword>
<keyword id="KW-0812">Transmembrane</keyword>
<keyword id="KW-1133">Transmembrane helix</keyword>
<sequence length="206" mass="23410">MDTPTKSRRANGSIAFPEDFKPVKRNIQSELNQELETCLFSFRDKEYSAEKFSGIVFREMGWKDFDRLDKERISLYWVDQVIHGVTGVLWSPGGYEDKENYFGSSLNFLKPSFKSPTAIVSQNGDVKVTYWFNDLKNKKVIQLQVIFDTNGDIKSRTILSSGDSQFYTGLSVIVGGATALALGLFFLRNKKFVTPVLRIASSKFKN</sequence>
<accession>P0C7W5</accession>
<accession>C7G017</accession>
<accession>Q54TJ8</accession>
<protein>
    <recommendedName>
        <fullName>Uncharacterized protein DDB_G0281707</fullName>
    </recommendedName>
</protein>
<comment type="subcellular location">
    <subcellularLocation>
        <location evidence="2">Membrane</location>
        <topology evidence="2">Single-pass membrane protein</topology>
    </subcellularLocation>
</comment>
<dbReference type="EMBL" id="AAFI02000042">
    <property type="protein sequence ID" value="EEU04102.1"/>
    <property type="molecule type" value="Genomic_DNA"/>
</dbReference>
<dbReference type="RefSeq" id="XP_002649154.1">
    <property type="nucleotide sequence ID" value="XM_002649108.1"/>
</dbReference>
<dbReference type="FunCoup" id="P0C7W5">
    <property type="interactions" value="141"/>
</dbReference>
<dbReference type="PaxDb" id="44689-DDB0266649"/>
<dbReference type="EnsemblProtists" id="EEU04102">
    <property type="protein sequence ID" value="EEU04102"/>
    <property type="gene ID" value="DDB_G0281707"/>
</dbReference>
<dbReference type="GeneID" id="8623202"/>
<dbReference type="KEGG" id="ddi:DDB_G0281707"/>
<dbReference type="dictyBase" id="DDB_G0281707"/>
<dbReference type="VEuPathDB" id="AmoebaDB:DDB_G0281707"/>
<dbReference type="HOGENOM" id="CLU_1334029_0_0_1"/>
<dbReference type="InParanoid" id="P0C7W5"/>
<dbReference type="OMA" id="HEPIVES"/>
<dbReference type="PRO" id="PR:P0C7W5"/>
<dbReference type="Proteomes" id="UP000002195">
    <property type="component" value="Chromosome 3"/>
</dbReference>
<dbReference type="GO" id="GO:0016020">
    <property type="term" value="C:membrane"/>
    <property type="evidence" value="ECO:0007669"/>
    <property type="project" value="UniProtKB-SubCell"/>
</dbReference>
<feature type="chain" id="PRO_0000344509" description="Uncharacterized protein DDB_G0281707">
    <location>
        <begin position="1"/>
        <end position="206"/>
    </location>
</feature>
<feature type="transmembrane region" description="Helical" evidence="1">
    <location>
        <begin position="166"/>
        <end position="186"/>
    </location>
</feature>
<reference key="1">
    <citation type="journal article" date="2005" name="Nature">
        <title>The genome of the social amoeba Dictyostelium discoideum.</title>
        <authorList>
            <person name="Eichinger L."/>
            <person name="Pachebat J.A."/>
            <person name="Gloeckner G."/>
            <person name="Rajandream M.A."/>
            <person name="Sucgang R."/>
            <person name="Berriman M."/>
            <person name="Song J."/>
            <person name="Olsen R."/>
            <person name="Szafranski K."/>
            <person name="Xu Q."/>
            <person name="Tunggal B."/>
            <person name="Kummerfeld S."/>
            <person name="Madera M."/>
            <person name="Konfortov B.A."/>
            <person name="Rivero F."/>
            <person name="Bankier A.T."/>
            <person name="Lehmann R."/>
            <person name="Hamlin N."/>
            <person name="Davies R."/>
            <person name="Gaudet P."/>
            <person name="Fey P."/>
            <person name="Pilcher K."/>
            <person name="Chen G."/>
            <person name="Saunders D."/>
            <person name="Sodergren E.J."/>
            <person name="Davis P."/>
            <person name="Kerhornou A."/>
            <person name="Nie X."/>
            <person name="Hall N."/>
            <person name="Anjard C."/>
            <person name="Hemphill L."/>
            <person name="Bason N."/>
            <person name="Farbrother P."/>
            <person name="Desany B."/>
            <person name="Just E."/>
            <person name="Morio T."/>
            <person name="Rost R."/>
            <person name="Churcher C.M."/>
            <person name="Cooper J."/>
            <person name="Haydock S."/>
            <person name="van Driessche N."/>
            <person name="Cronin A."/>
            <person name="Goodhead I."/>
            <person name="Muzny D.M."/>
            <person name="Mourier T."/>
            <person name="Pain A."/>
            <person name="Lu M."/>
            <person name="Harper D."/>
            <person name="Lindsay R."/>
            <person name="Hauser H."/>
            <person name="James K.D."/>
            <person name="Quiles M."/>
            <person name="Madan Babu M."/>
            <person name="Saito T."/>
            <person name="Buchrieser C."/>
            <person name="Wardroper A."/>
            <person name="Felder M."/>
            <person name="Thangavelu M."/>
            <person name="Johnson D."/>
            <person name="Knights A."/>
            <person name="Loulseged H."/>
            <person name="Mungall K.L."/>
            <person name="Oliver K."/>
            <person name="Price C."/>
            <person name="Quail M.A."/>
            <person name="Urushihara H."/>
            <person name="Hernandez J."/>
            <person name="Rabbinowitsch E."/>
            <person name="Steffen D."/>
            <person name="Sanders M."/>
            <person name="Ma J."/>
            <person name="Kohara Y."/>
            <person name="Sharp S."/>
            <person name="Simmonds M.N."/>
            <person name="Spiegler S."/>
            <person name="Tivey A."/>
            <person name="Sugano S."/>
            <person name="White B."/>
            <person name="Walker D."/>
            <person name="Woodward J.R."/>
            <person name="Winckler T."/>
            <person name="Tanaka Y."/>
            <person name="Shaulsky G."/>
            <person name="Schleicher M."/>
            <person name="Weinstock G.M."/>
            <person name="Rosenthal A."/>
            <person name="Cox E.C."/>
            <person name="Chisholm R.L."/>
            <person name="Gibbs R.A."/>
            <person name="Loomis W.F."/>
            <person name="Platzer M."/>
            <person name="Kay R.R."/>
            <person name="Williams J.G."/>
            <person name="Dear P.H."/>
            <person name="Noegel A.A."/>
            <person name="Barrell B.G."/>
            <person name="Kuspa A."/>
        </authorList>
    </citation>
    <scope>NUCLEOTIDE SEQUENCE [LARGE SCALE GENOMIC DNA]</scope>
    <source>
        <strain>AX4</strain>
    </source>
</reference>
<evidence type="ECO:0000255" key="1"/>
<evidence type="ECO:0000305" key="2"/>
<proteinExistence type="predicted"/>
<gene>
    <name type="ORF">DDB_G0281707</name>
</gene>
<name>Y6649_DICDI</name>